<evidence type="ECO:0000256" key="1">
    <source>
        <dbReference type="SAM" id="MobiDB-lite"/>
    </source>
</evidence>
<evidence type="ECO:0000305" key="2"/>
<proteinExistence type="evidence at transcript level"/>
<comment type="function">
    <text>Nematode cuticles are composed largely of collagen-like proteins. The cuticle functions both as an exoskeleton and as a barrier to protect the worm from its environment.</text>
</comment>
<comment type="miscellaneous">
    <text>This protein shows 4 potential triple-helical regions, which contain glycine as every third amino acid.</text>
</comment>
<comment type="miscellaneous">
    <text>In all nematode cuticle collagens, the polypeptide chains are complexed within the cuticle by disulfide bonds and other types of covalent cross-links.</text>
</comment>
<comment type="similarity">
    <text evidence="2">Belongs to the cuticular collagen family.</text>
</comment>
<keyword id="KW-0176">Collagen</keyword>
<keyword id="KW-0193">Cuticle</keyword>
<keyword id="KW-0677">Repeat</keyword>
<dbReference type="EMBL" id="M32821">
    <property type="protein sequence ID" value="AAA29174.1"/>
    <property type="molecule type" value="mRNA"/>
</dbReference>
<dbReference type="EMBL" id="M32820">
    <property type="protein sequence ID" value="AAA29173.1"/>
    <property type="molecule type" value="Genomic_DNA"/>
</dbReference>
<dbReference type="PIR" id="A44984">
    <property type="entry name" value="A44984"/>
</dbReference>
<dbReference type="SMR" id="P16253"/>
<dbReference type="Proteomes" id="UP000025227">
    <property type="component" value="Unplaced"/>
</dbReference>
<dbReference type="GO" id="GO:0005581">
    <property type="term" value="C:collagen trimer"/>
    <property type="evidence" value="ECO:0007669"/>
    <property type="project" value="UniProtKB-KW"/>
</dbReference>
<dbReference type="GO" id="GO:0042302">
    <property type="term" value="F:structural constituent of cuticle"/>
    <property type="evidence" value="ECO:0007669"/>
    <property type="project" value="UniProtKB-KW"/>
</dbReference>
<dbReference type="InterPro" id="IPR002486">
    <property type="entry name" value="Col_cuticle_N"/>
</dbReference>
<dbReference type="InterPro" id="IPR008160">
    <property type="entry name" value="Collagen"/>
</dbReference>
<dbReference type="PANTHER" id="PTHR24637">
    <property type="entry name" value="COLLAGEN"/>
    <property type="match status" value="1"/>
</dbReference>
<dbReference type="PANTHER" id="PTHR24637:SF377">
    <property type="entry name" value="COLLAGEN TYPE IX ALPHA 1 CHAIN"/>
    <property type="match status" value="1"/>
</dbReference>
<dbReference type="Pfam" id="PF01484">
    <property type="entry name" value="Col_cuticle_N"/>
    <property type="match status" value="1"/>
</dbReference>
<dbReference type="Pfam" id="PF01391">
    <property type="entry name" value="Collagen"/>
    <property type="match status" value="2"/>
</dbReference>
<dbReference type="SMART" id="SM01088">
    <property type="entry name" value="Col_cuticle_N"/>
    <property type="match status" value="1"/>
</dbReference>
<protein>
    <recommendedName>
        <fullName>Cuticle collagen 3A3</fullName>
    </recommendedName>
</protein>
<gene>
    <name type="primary">3A3</name>
</gene>
<feature type="chain" id="PRO_0000127607" description="Cuticle collagen 3A3">
    <location>
        <begin position="1"/>
        <end position="295"/>
    </location>
</feature>
<feature type="region of interest" description="Disordered" evidence="1">
    <location>
        <begin position="81"/>
        <end position="278"/>
    </location>
</feature>
<feature type="region of interest" description="Triple-helical region">
    <location>
        <begin position="98"/>
        <end position="127"/>
    </location>
</feature>
<feature type="region of interest" description="Triple-helical region">
    <location>
        <begin position="147"/>
        <end position="203"/>
    </location>
</feature>
<feature type="region of interest" description="Triple-helical region">
    <location>
        <begin position="212"/>
        <end position="277"/>
    </location>
</feature>
<feature type="compositionally biased region" description="Pro residues" evidence="1">
    <location>
        <begin position="97"/>
        <end position="109"/>
    </location>
</feature>
<feature type="compositionally biased region" description="Pro residues" evidence="1">
    <location>
        <begin position="146"/>
        <end position="160"/>
    </location>
</feature>
<feature type="compositionally biased region" description="Low complexity" evidence="1">
    <location>
        <begin position="172"/>
        <end position="182"/>
    </location>
</feature>
<feature type="compositionally biased region" description="Pro residues" evidence="1">
    <location>
        <begin position="217"/>
        <end position="228"/>
    </location>
</feature>
<feature type="compositionally biased region" description="Low complexity" evidence="1">
    <location>
        <begin position="229"/>
        <end position="244"/>
    </location>
</feature>
<feature type="compositionally biased region" description="Pro residues" evidence="1">
    <location>
        <begin position="261"/>
        <end position="271"/>
    </location>
</feature>
<name>CUC3A_HAECO</name>
<reference key="1">
    <citation type="journal article" date="1989" name="Mol. Biochem. Parasitol.">
        <title>Cuticle collagen genes of Haemonchus contortus and Caenorhabditis elegans are highly conserved.</title>
        <authorList>
            <person name="Shamansky L.M."/>
            <person name="Pratt D."/>
            <person name="Boisvenue R.J."/>
            <person name="Cox G.N."/>
        </authorList>
    </citation>
    <scope>NUCLEOTIDE SEQUENCE [GENOMIC DNA / MRNA]</scope>
</reference>
<sequence length="295" mass="29618">MDVIDHRIKAYRFVAYAAVGFSVVAVLSVCVTLPIVYNYVHYVRKSLHKEASLCKISTNSVWDDVTVLRLAHFGNRTARQAITSSEENGGCESCCRPGPPGPPGPPGRPGRPGRPGAPGLPGVPGLPPPDGSCEPVSIPPCAECPAGPPGPPGKPGPPGDPGEDGQPGPPGQDGIPGQQGTKGPPGPPGIPGKPGESGEVGEDAECEPVAPGDQGPPGEPGPEGPPGEPGLQGPVGMPGQVGQKGESGSDGQLDFDGSPGRPGPPGPPGRPGEPGICPKYCAIDGGIFFEDGTRR</sequence>
<organism>
    <name type="scientific">Haemonchus contortus</name>
    <name type="common">Barber pole worm</name>
    <dbReference type="NCBI Taxonomy" id="6289"/>
    <lineage>
        <taxon>Eukaryota</taxon>
        <taxon>Metazoa</taxon>
        <taxon>Ecdysozoa</taxon>
        <taxon>Nematoda</taxon>
        <taxon>Chromadorea</taxon>
        <taxon>Rhabditida</taxon>
        <taxon>Rhabditina</taxon>
        <taxon>Rhabditomorpha</taxon>
        <taxon>Strongyloidea</taxon>
        <taxon>Trichostrongylidae</taxon>
        <taxon>Haemonchus</taxon>
    </lineage>
</organism>
<accession>P16253</accession>